<protein>
    <recommendedName>
        <fullName evidence="1">Ion-translocating oxidoreductase complex subunit G</fullName>
        <ecNumber evidence="1">7.-.-.-</ecNumber>
    </recommendedName>
    <alternativeName>
        <fullName evidence="1">Rnf electron transport complex subunit G</fullName>
    </alternativeName>
</protein>
<organism>
    <name type="scientific">Buchnera aphidicola subsp. Baizongia pistaciae (strain Bp)</name>
    <dbReference type="NCBI Taxonomy" id="224915"/>
    <lineage>
        <taxon>Bacteria</taxon>
        <taxon>Pseudomonadati</taxon>
        <taxon>Pseudomonadota</taxon>
        <taxon>Gammaproteobacteria</taxon>
        <taxon>Enterobacterales</taxon>
        <taxon>Erwiniaceae</taxon>
        <taxon>Buchnera</taxon>
    </lineage>
</organism>
<proteinExistence type="inferred from homology"/>
<sequence>MLKKNNKRKIFCSALVLGSFGFLAASFVSIIYVITKNKIQYQEQRYKNIIFNHIVPSNLHDNDIQRSCLILNNKLLGDKKNHYLWLAKKKQDITAVIFETIAPDGYSGIIKMVISLDIKNGKILGVRVLSHNETPGLGDKIDVNISNWITKFSGVKIFSLDERDLSLKKYGGNIDQFTGATITPLAVVNSIKRTIVLVKMLLSSKFSELTSCDNYE</sequence>
<feature type="chain" id="PRO_0000214632" description="Ion-translocating oxidoreductase complex subunit G">
    <location>
        <begin position="1"/>
        <end position="216"/>
    </location>
</feature>
<feature type="transmembrane region" description="Helical" evidence="1">
    <location>
        <begin position="14"/>
        <end position="34"/>
    </location>
</feature>
<feature type="modified residue" description="FMN phosphoryl threonine" evidence="1">
    <location>
        <position position="181"/>
    </location>
</feature>
<gene>
    <name evidence="1" type="primary">rnfG</name>
    <name type="ordered locus">bbp_112</name>
</gene>
<name>RNFG_BUCBP</name>
<evidence type="ECO:0000255" key="1">
    <source>
        <dbReference type="HAMAP-Rule" id="MF_00479"/>
    </source>
</evidence>
<evidence type="ECO:0000305" key="2"/>
<accession>Q89AW6</accession>
<dbReference type="EC" id="7.-.-.-" evidence="1"/>
<dbReference type="EMBL" id="AE016826">
    <property type="protein sequence ID" value="AAO26846.1"/>
    <property type="molecule type" value="Genomic_DNA"/>
</dbReference>
<dbReference type="RefSeq" id="WP_011091247.1">
    <property type="nucleotide sequence ID" value="NC_004545.1"/>
</dbReference>
<dbReference type="SMR" id="Q89AW6"/>
<dbReference type="STRING" id="224915.bbp_112"/>
<dbReference type="KEGG" id="bab:bbp_112"/>
<dbReference type="eggNOG" id="COG4659">
    <property type="taxonomic scope" value="Bacteria"/>
</dbReference>
<dbReference type="HOGENOM" id="CLU_077882_1_0_6"/>
<dbReference type="Proteomes" id="UP000000601">
    <property type="component" value="Chromosome"/>
</dbReference>
<dbReference type="GO" id="GO:0005886">
    <property type="term" value="C:plasma membrane"/>
    <property type="evidence" value="ECO:0007669"/>
    <property type="project" value="UniProtKB-SubCell"/>
</dbReference>
<dbReference type="GO" id="GO:0009055">
    <property type="term" value="F:electron transfer activity"/>
    <property type="evidence" value="ECO:0007669"/>
    <property type="project" value="InterPro"/>
</dbReference>
<dbReference type="GO" id="GO:0010181">
    <property type="term" value="F:FMN binding"/>
    <property type="evidence" value="ECO:0007669"/>
    <property type="project" value="InterPro"/>
</dbReference>
<dbReference type="GO" id="GO:0022900">
    <property type="term" value="P:electron transport chain"/>
    <property type="evidence" value="ECO:0007669"/>
    <property type="project" value="UniProtKB-UniRule"/>
</dbReference>
<dbReference type="HAMAP" id="MF_00479">
    <property type="entry name" value="RsxG_RnfG"/>
    <property type="match status" value="1"/>
</dbReference>
<dbReference type="InterPro" id="IPR007329">
    <property type="entry name" value="FMN-bd"/>
</dbReference>
<dbReference type="InterPro" id="IPR010209">
    <property type="entry name" value="Ion_transpt_RnfG/RsxG"/>
</dbReference>
<dbReference type="NCBIfam" id="NF002519">
    <property type="entry name" value="PRK01908.1"/>
    <property type="match status" value="1"/>
</dbReference>
<dbReference type="NCBIfam" id="TIGR01947">
    <property type="entry name" value="rnfG"/>
    <property type="match status" value="1"/>
</dbReference>
<dbReference type="PANTHER" id="PTHR36118">
    <property type="entry name" value="ION-TRANSLOCATING OXIDOREDUCTASE COMPLEX SUBUNIT G"/>
    <property type="match status" value="1"/>
</dbReference>
<dbReference type="PANTHER" id="PTHR36118:SF1">
    <property type="entry name" value="ION-TRANSLOCATING OXIDOREDUCTASE COMPLEX SUBUNIT G"/>
    <property type="match status" value="1"/>
</dbReference>
<dbReference type="Pfam" id="PF04205">
    <property type="entry name" value="FMN_bind"/>
    <property type="match status" value="1"/>
</dbReference>
<dbReference type="PIRSF" id="PIRSF006091">
    <property type="entry name" value="E_trnsport_RnfG"/>
    <property type="match status" value="1"/>
</dbReference>
<dbReference type="SMART" id="SM00900">
    <property type="entry name" value="FMN_bind"/>
    <property type="match status" value="1"/>
</dbReference>
<comment type="function">
    <text evidence="1">Part of a membrane-bound complex that couples electron transfer with translocation of ions across the membrane.</text>
</comment>
<comment type="cofactor">
    <cofactor evidence="1">
        <name>FMN</name>
        <dbReference type="ChEBI" id="CHEBI:58210"/>
    </cofactor>
</comment>
<comment type="subunit">
    <text evidence="1">The complex is composed of six subunits: RnfA, RnfB, RnfC, RnfD, RnfE and RnfG.</text>
</comment>
<comment type="subcellular location">
    <subcellularLocation>
        <location evidence="1">Cell inner membrane</location>
        <topology evidence="1">Single-pass membrane protein</topology>
    </subcellularLocation>
</comment>
<comment type="similarity">
    <text evidence="1 2">Belongs to the RnfG family.</text>
</comment>
<keyword id="KW-0997">Cell inner membrane</keyword>
<keyword id="KW-1003">Cell membrane</keyword>
<keyword id="KW-0249">Electron transport</keyword>
<keyword id="KW-0285">Flavoprotein</keyword>
<keyword id="KW-0288">FMN</keyword>
<keyword id="KW-0472">Membrane</keyword>
<keyword id="KW-0597">Phosphoprotein</keyword>
<keyword id="KW-1185">Reference proteome</keyword>
<keyword id="KW-1278">Translocase</keyword>
<keyword id="KW-0812">Transmembrane</keyword>
<keyword id="KW-1133">Transmembrane helix</keyword>
<keyword id="KW-0813">Transport</keyword>
<reference key="1">
    <citation type="journal article" date="2003" name="Proc. Natl. Acad. Sci. U.S.A.">
        <title>Reductive genome evolution in Buchnera aphidicola.</title>
        <authorList>
            <person name="van Ham R.C.H.J."/>
            <person name="Kamerbeek J."/>
            <person name="Palacios C."/>
            <person name="Rausell C."/>
            <person name="Abascal F."/>
            <person name="Bastolla U."/>
            <person name="Fernandez J.M."/>
            <person name="Jimenez L."/>
            <person name="Postigo M."/>
            <person name="Silva F.J."/>
            <person name="Tamames J."/>
            <person name="Viguera E."/>
            <person name="Latorre A."/>
            <person name="Valencia A."/>
            <person name="Moran F."/>
            <person name="Moya A."/>
        </authorList>
    </citation>
    <scope>NUCLEOTIDE SEQUENCE [LARGE SCALE GENOMIC DNA]</scope>
    <source>
        <strain>Bp</strain>
    </source>
</reference>